<reference key="1">
    <citation type="journal article" date="2003" name="Genome Res.">
        <title>Analysis of the gene-dense major histocompatibility complex class III region and its comparison to mouse.</title>
        <authorList>
            <person name="Xie T."/>
            <person name="Rowen L."/>
            <person name="Aguado B."/>
            <person name="Ahearn M.E."/>
            <person name="Madan A."/>
            <person name="Qin S."/>
            <person name="Campbell R.D."/>
            <person name="Hood L."/>
        </authorList>
    </citation>
    <scope>NUCLEOTIDE SEQUENCE [LARGE SCALE GENOMIC DNA]</scope>
    <source>
        <strain>129</strain>
    </source>
</reference>
<reference key="2">
    <citation type="journal article" date="2010" name="Cell">
        <title>A tissue-specific atlas of mouse protein phosphorylation and expression.</title>
        <authorList>
            <person name="Huttlin E.L."/>
            <person name="Jedrychowski M.P."/>
            <person name="Elias J.E."/>
            <person name="Goswami T."/>
            <person name="Rad R."/>
            <person name="Beausoleil S.A."/>
            <person name="Villen J."/>
            <person name="Haas W."/>
            <person name="Sowa M.E."/>
            <person name="Gygi S.P."/>
        </authorList>
    </citation>
    <scope>IDENTIFICATION BY MASS SPECTROMETRY [LARGE SCALE ANALYSIS]</scope>
    <source>
        <tissue>Heart</tissue>
    </source>
</reference>
<proteinExistence type="evidence at protein level"/>
<accession>Q9Z1R4</accession>
<keyword id="KW-0597">Phosphoprotein</keyword>
<keyword id="KW-1185">Reference proteome</keyword>
<feature type="chain" id="PRO_0000089505" description="Uncharacterized protein C6orf47 homolog">
    <location>
        <begin position="1"/>
        <end position="293"/>
    </location>
</feature>
<feature type="region of interest" description="Disordered" evidence="3">
    <location>
        <begin position="1"/>
        <end position="114"/>
    </location>
</feature>
<feature type="region of interest" description="Disordered" evidence="3">
    <location>
        <begin position="268"/>
        <end position="293"/>
    </location>
</feature>
<feature type="compositionally biased region" description="Basic and acidic residues" evidence="3">
    <location>
        <begin position="73"/>
        <end position="95"/>
    </location>
</feature>
<feature type="compositionally biased region" description="Basic and acidic residues" evidence="3">
    <location>
        <begin position="277"/>
        <end position="293"/>
    </location>
</feature>
<feature type="modified residue" description="Phosphoserine" evidence="2">
    <location>
        <position position="34"/>
    </location>
</feature>
<feature type="modified residue" description="Phosphoserine" evidence="2">
    <location>
        <position position="35"/>
    </location>
</feature>
<feature type="modified residue" description="Phosphoserine" evidence="1">
    <location>
        <position position="89"/>
    </location>
</feature>
<protein>
    <recommendedName>
        <fullName>Uncharacterized protein C6orf47 homolog</fullName>
    </recommendedName>
</protein>
<name>CF047_MOUSE</name>
<sequence length="293" mass="32015">MFLRRLGGWLPRPWGRKKSTKADLPAPEPRWVDSSPENSGSDWDSAPETMGDVGPLKTKDSGTRRPPGAAPESSRDLKVDQLGSKRMDSLKRDKTASTIQEPARLESGGAIPKLDWDPVDSGGVKNLGVSAQGRLGTIGPEALLEKPGRRQKLLRWLRGEPGAPSHYLQDPEEYLQISTNLTLHLLELLATALLALCSRPLRAILDALGLRGPVGLWLHGLLCFLAALHGLHAVLSLLTAHPLHFACLFGLLQALVLAVSLREPVEDEETADWESEGQEREAKEQREGPGRML</sequence>
<evidence type="ECO:0000250" key="1">
    <source>
        <dbReference type="UniProtKB" id="O95873"/>
    </source>
</evidence>
<evidence type="ECO:0000250" key="2">
    <source>
        <dbReference type="UniProtKB" id="Q6MG51"/>
    </source>
</evidence>
<evidence type="ECO:0000256" key="3">
    <source>
        <dbReference type="SAM" id="MobiDB-lite"/>
    </source>
</evidence>
<gene>
    <name type="primary">D17h6s53e</name>
</gene>
<organism>
    <name type="scientific">Mus musculus</name>
    <name type="common">Mouse</name>
    <dbReference type="NCBI Taxonomy" id="10090"/>
    <lineage>
        <taxon>Eukaryota</taxon>
        <taxon>Metazoa</taxon>
        <taxon>Chordata</taxon>
        <taxon>Craniata</taxon>
        <taxon>Vertebrata</taxon>
        <taxon>Euteleostomi</taxon>
        <taxon>Mammalia</taxon>
        <taxon>Eutheria</taxon>
        <taxon>Euarchontoglires</taxon>
        <taxon>Glires</taxon>
        <taxon>Rodentia</taxon>
        <taxon>Myomorpha</taxon>
        <taxon>Muroidea</taxon>
        <taxon>Muridae</taxon>
        <taxon>Murinae</taxon>
        <taxon>Mus</taxon>
        <taxon>Mus</taxon>
    </lineage>
</organism>
<dbReference type="EMBL" id="AF109719">
    <property type="protein sequence ID" value="AAC82477.1"/>
    <property type="molecule type" value="Genomic_DNA"/>
</dbReference>
<dbReference type="CCDS" id="CCDS28686.1"/>
<dbReference type="RefSeq" id="NP_258438.1">
    <property type="nucleotide sequence ID" value="NM_033477.2"/>
</dbReference>
<dbReference type="BioGRID" id="227757">
    <property type="interactions" value="1"/>
</dbReference>
<dbReference type="FunCoup" id="Q9Z1R4">
    <property type="interactions" value="162"/>
</dbReference>
<dbReference type="STRING" id="10090.ENSMUSP00000061264"/>
<dbReference type="iPTMnet" id="Q9Z1R4"/>
<dbReference type="PhosphoSitePlus" id="Q9Z1R4"/>
<dbReference type="PaxDb" id="10090-ENSMUSP00000061264"/>
<dbReference type="ProteomicsDB" id="281646"/>
<dbReference type="Pumba" id="Q9Z1R4"/>
<dbReference type="TopDownProteomics" id="Q9Z1R4"/>
<dbReference type="Antibodypedia" id="49928">
    <property type="antibodies" value="16 antibodies from 8 providers"/>
</dbReference>
<dbReference type="Ensembl" id="ENSMUST00000061859.7">
    <property type="protein sequence ID" value="ENSMUSP00000061264.6"/>
    <property type="gene ID" value="ENSMUSG00000043311.8"/>
</dbReference>
<dbReference type="GeneID" id="114585"/>
<dbReference type="KEGG" id="mmu:114585"/>
<dbReference type="UCSC" id="uc008cfz.2">
    <property type="organism name" value="mouse"/>
</dbReference>
<dbReference type="AGR" id="MGI:90673"/>
<dbReference type="CTD" id="114585"/>
<dbReference type="MGI" id="MGI:90673">
    <property type="gene designation" value="D17H6S53E"/>
</dbReference>
<dbReference type="VEuPathDB" id="HostDB:ENSMUSG00000043311"/>
<dbReference type="eggNOG" id="ENOG502SNQC">
    <property type="taxonomic scope" value="Eukaryota"/>
</dbReference>
<dbReference type="GeneTree" id="ENSGT00390000009270"/>
<dbReference type="HOGENOM" id="CLU_081876_0_0_1"/>
<dbReference type="InParanoid" id="Q9Z1R4"/>
<dbReference type="OMA" id="KWDKTVS"/>
<dbReference type="OrthoDB" id="9950360at2759"/>
<dbReference type="PhylomeDB" id="Q9Z1R4"/>
<dbReference type="TreeFam" id="TF339331"/>
<dbReference type="BioGRID-ORCS" id="114585">
    <property type="hits" value="7 hits in 76 CRISPR screens"/>
</dbReference>
<dbReference type="PRO" id="PR:Q9Z1R4"/>
<dbReference type="Proteomes" id="UP000000589">
    <property type="component" value="Chromosome 17"/>
</dbReference>
<dbReference type="RNAct" id="Q9Z1R4">
    <property type="molecule type" value="protein"/>
</dbReference>
<dbReference type="Bgee" id="ENSMUSG00000043311">
    <property type="expression patterns" value="Expressed in colon and 58 other cell types or tissues"/>
</dbReference>
<dbReference type="ExpressionAtlas" id="Q9Z1R4">
    <property type="expression patterns" value="baseline and differential"/>
</dbReference>
<dbReference type="InterPro" id="IPR029073">
    <property type="entry name" value="DUF4661"/>
</dbReference>
<dbReference type="PANTHER" id="PTHR14307">
    <property type="entry name" value="C6ORF47 FAMILY MEMBER"/>
    <property type="match status" value="1"/>
</dbReference>
<dbReference type="PANTHER" id="PTHR14307:SF0">
    <property type="entry name" value="SI:CH73-25F10.6"/>
    <property type="match status" value="1"/>
</dbReference>
<dbReference type="Pfam" id="PF15576">
    <property type="entry name" value="DUF4661"/>
    <property type="match status" value="1"/>
</dbReference>